<protein>
    <recommendedName>
        <fullName>DNA-directed RNA polymerase II subunit RPB4</fullName>
        <shortName>RNA polymerase II subunit B4</shortName>
    </recommendedName>
    <alternativeName>
        <fullName>B32</fullName>
    </alternativeName>
    <alternativeName>
        <fullName>DNA-directed RNA polymerase II 32 kDa polypeptide</fullName>
    </alternativeName>
</protein>
<gene>
    <name type="primary">RPB4</name>
    <name type="ordered locus">YJL140W</name>
    <name type="ORF">J0654</name>
</gene>
<proteinExistence type="evidence at protein level"/>
<reference key="1">
    <citation type="journal article" date="1989" name="Mol. Cell. Biol.">
        <title>RNA polymerase II subunit RPB4 is essential for high- and low-temperature yeast cell growth.</title>
        <authorList>
            <person name="Woychik N.A."/>
            <person name="Young R.A."/>
        </authorList>
    </citation>
    <scope>NUCLEOTIDE SEQUENCE [GENOMIC DNA]</scope>
</reference>
<reference key="2">
    <citation type="journal article" date="1991" name="Nucleic Acids Res.">
        <title>The Saccharomyces cerevisiae RPB4 gene is tightly linked to the TIF2 gene.</title>
        <authorList>
            <person name="Foreman P.K."/>
            <person name="Davis R.W."/>
            <person name="Sachs A.B."/>
        </authorList>
    </citation>
    <scope>NUCLEOTIDE SEQUENCE [GENOMIC DNA]</scope>
</reference>
<reference key="3">
    <citation type="journal article" date="1996" name="Yeast">
        <title>Sequence analysis of a 40.7 kb segment from the left arm of yeast chromosome X reveals 14 known genes and 13 new open reading frames including homologues of genes clustered on the right arm of chromosome XI.</title>
        <authorList>
            <person name="Katsoulou C."/>
            <person name="Tzermia M."/>
            <person name="Tavernarakis N."/>
            <person name="Alexandraki D."/>
        </authorList>
    </citation>
    <scope>NUCLEOTIDE SEQUENCE [GENOMIC DNA]</scope>
    <source>
        <strain>ATCC 96604 / S288c / FY1679</strain>
    </source>
</reference>
<reference key="4">
    <citation type="journal article" date="1996" name="EMBO J.">
        <title>Complete nucleotide sequence of Saccharomyces cerevisiae chromosome X.</title>
        <authorList>
            <person name="Galibert F."/>
            <person name="Alexandraki D."/>
            <person name="Baur A."/>
            <person name="Boles E."/>
            <person name="Chalwatzis N."/>
            <person name="Chuat J.-C."/>
            <person name="Coster F."/>
            <person name="Cziepluch C."/>
            <person name="de Haan M."/>
            <person name="Domdey H."/>
            <person name="Durand P."/>
            <person name="Entian K.-D."/>
            <person name="Gatius M."/>
            <person name="Goffeau A."/>
            <person name="Grivell L.A."/>
            <person name="Hennemann A."/>
            <person name="Herbert C.J."/>
            <person name="Heumann K."/>
            <person name="Hilger F."/>
            <person name="Hollenberg C.P."/>
            <person name="Huang M.-E."/>
            <person name="Jacq C."/>
            <person name="Jauniaux J.-C."/>
            <person name="Katsoulou C."/>
            <person name="Kirchrath L."/>
            <person name="Kleine K."/>
            <person name="Kordes E."/>
            <person name="Koetter P."/>
            <person name="Liebl S."/>
            <person name="Louis E.J."/>
            <person name="Manus V."/>
            <person name="Mewes H.-W."/>
            <person name="Miosga T."/>
            <person name="Obermaier B."/>
            <person name="Perea J."/>
            <person name="Pohl T.M."/>
            <person name="Portetelle D."/>
            <person name="Pujol A."/>
            <person name="Purnelle B."/>
            <person name="Ramezani Rad M."/>
            <person name="Rasmussen S.W."/>
            <person name="Rose M."/>
            <person name="Rossau R."/>
            <person name="Schaaff-Gerstenschlaeger I."/>
            <person name="Smits P.H.M."/>
            <person name="Scarcez T."/>
            <person name="Soriano N."/>
            <person name="To Van D."/>
            <person name="Tzermia M."/>
            <person name="Van Broekhoven A."/>
            <person name="Vandenbol M."/>
            <person name="Wedler H."/>
            <person name="von Wettstein D."/>
            <person name="Wambutt R."/>
            <person name="Zagulski M."/>
            <person name="Zollner A."/>
            <person name="Karpfinger-Hartl L."/>
        </authorList>
    </citation>
    <scope>NUCLEOTIDE SEQUENCE [LARGE SCALE GENOMIC DNA]</scope>
    <source>
        <strain>ATCC 204508 / S288c</strain>
    </source>
</reference>
<reference key="5">
    <citation type="journal article" date="2014" name="G3 (Bethesda)">
        <title>The reference genome sequence of Saccharomyces cerevisiae: Then and now.</title>
        <authorList>
            <person name="Engel S.R."/>
            <person name="Dietrich F.S."/>
            <person name="Fisk D.G."/>
            <person name="Binkley G."/>
            <person name="Balakrishnan R."/>
            <person name="Costanzo M.C."/>
            <person name="Dwight S.S."/>
            <person name="Hitz B.C."/>
            <person name="Karra K."/>
            <person name="Nash R.S."/>
            <person name="Weng S."/>
            <person name="Wong E.D."/>
            <person name="Lloyd P."/>
            <person name="Skrzypek M.S."/>
            <person name="Miyasato S.R."/>
            <person name="Simison M."/>
            <person name="Cherry J.M."/>
        </authorList>
    </citation>
    <scope>GENOME REANNOTATION</scope>
    <source>
        <strain>ATCC 204508 / S288c</strain>
    </source>
</reference>
<reference key="6">
    <citation type="journal article" date="2007" name="Genome Res.">
        <title>Approaching a complete repository of sequence-verified protein-encoding clones for Saccharomyces cerevisiae.</title>
        <authorList>
            <person name="Hu Y."/>
            <person name="Rolfs A."/>
            <person name="Bhullar B."/>
            <person name="Murthy T.V.S."/>
            <person name="Zhu C."/>
            <person name="Berger M.F."/>
            <person name="Camargo A.A."/>
            <person name="Kelley F."/>
            <person name="McCarron S."/>
            <person name="Jepson D."/>
            <person name="Richardson A."/>
            <person name="Raphael J."/>
            <person name="Moreira D."/>
            <person name="Taycher E."/>
            <person name="Zuo D."/>
            <person name="Mohr S."/>
            <person name="Kane M.F."/>
            <person name="Williamson J."/>
            <person name="Simpson A.J.G."/>
            <person name="Bulyk M.L."/>
            <person name="Harlow E."/>
            <person name="Marsischky G."/>
            <person name="Kolodner R.D."/>
            <person name="LaBaer J."/>
        </authorList>
    </citation>
    <scope>NUCLEOTIDE SEQUENCE [GENOMIC DNA]</scope>
    <source>
        <strain>ATCC 204508 / S288c</strain>
    </source>
</reference>
<reference key="7">
    <citation type="journal article" date="1991" name="J. Biol. Chem.">
        <title>Two dissociable subunits of yeast RNA polymerase II stimulate the initiation of transcription at a promoter in vitro.</title>
        <authorList>
            <person name="Edwards A.M."/>
            <person name="Kane C.M."/>
            <person name="Young R.A."/>
            <person name="Kornberg R.D."/>
        </authorList>
    </citation>
    <scope>FUNCTION OF THE RPB4-RPB7 COMPLEX</scope>
</reference>
<reference key="8">
    <citation type="journal article" date="2001" name="J. Biol. Chem.">
        <title>Dissociable Rpb4-Rpb7 subassembly of RNA polymerase II binds to single-strand nucleic acid and mediates a post-recruitment step in transcription initiation.</title>
        <authorList>
            <person name="Orlicky S.M."/>
            <person name="Tran P.T."/>
            <person name="Sayre M.H."/>
            <person name="Edwards A.M."/>
        </authorList>
    </citation>
    <scope>FUNCTION OF THE RPB4-RPB7 COMPLEX</scope>
</reference>
<reference key="9">
    <citation type="journal article" date="2001" name="J. Biol. Chem.">
        <title>Rpb4, a non-essential subunit of core RNA polymerase II of Saccharomyces cerevisiae is important for activated transcription of a subset of genes.</title>
        <authorList>
            <person name="Pillai B."/>
            <person name="Sampath V."/>
            <person name="Sharma N."/>
            <person name="Sadhale P."/>
        </authorList>
    </citation>
    <scope>FUNCTION</scope>
</reference>
<reference key="10">
    <citation type="journal article" date="2002" name="EMBO J.">
        <title>Rpb4 and Rpb9 mediate subpathways of transcription-coupled DNA repair in Saccharomyces cerevisiae.</title>
        <authorList>
            <person name="Li S."/>
            <person name="Smerdon M.J."/>
        </authorList>
    </citation>
    <scope>FUNCTION IN DNA REPAIR</scope>
</reference>
<reference key="11">
    <citation type="journal article" date="2003" name="Mol. Biol. Cell">
        <title>Rpb4p, a subunit of RNA polymerase II, mediates mRNA export during stress.</title>
        <authorList>
            <person name="Farago M."/>
            <person name="Nahari T."/>
            <person name="Hammel C."/>
            <person name="Cole C.N."/>
            <person name="Choder M."/>
        </authorList>
    </citation>
    <scope>FUNCTION IN MRNA EXPORT</scope>
</reference>
<reference key="12">
    <citation type="journal article" date="2004" name="Mol. Cell">
        <title>Structure and mechanism of RNA polymerase II CTD phosphatases.</title>
        <authorList>
            <person name="Kamenski T."/>
            <person name="Heilmeier S."/>
            <person name="Meinhart A."/>
            <person name="Cramer P."/>
        </authorList>
    </citation>
    <scope>FUNCTION OF THE RPB4-RPB7 COMPLEX</scope>
</reference>
<reference key="13">
    <citation type="journal article" date="2005" name="Genes Dev.">
        <title>The RNA polymerase II subunit Rpb4p mediates decay of a specific class of mRNAs.</title>
        <authorList>
            <person name="Lotan R."/>
            <person name="Bar-On V.G."/>
            <person name="Harel-Sharvit L."/>
            <person name="Duek L."/>
            <person name="Melamed D."/>
            <person name="Choder M."/>
        </authorList>
    </citation>
    <scope>FUNCTION IN MRNA DECAY</scope>
    <scope>SUBCELLULAR LOCATION</scope>
    <scope>INTERACTION WITH PAT1 AND LSM2</scope>
</reference>
<reference key="14">
    <citation type="journal article" date="2006" name="Eukaryot. Cell">
        <title>Nucleocytoplasmic shuttling of the Rpb4p and Rpb7p subunits of Saccharomyces cerevisiae RNA polymerase II by two pathways.</title>
        <authorList>
            <person name="Selitrennik M."/>
            <person name="Duek L."/>
            <person name="Lotan R."/>
            <person name="Choder M."/>
        </authorList>
    </citation>
    <scope>SUBCELLULAR LOCATION</scope>
</reference>
<reference key="15">
    <citation type="journal article" date="2009" name="Science">
        <title>Global analysis of Cdk1 substrate phosphorylation sites provides insights into evolution.</title>
        <authorList>
            <person name="Holt L.J."/>
            <person name="Tuch B.B."/>
            <person name="Villen J."/>
            <person name="Johnson A.D."/>
            <person name="Gygi S.P."/>
            <person name="Morgan D.O."/>
        </authorList>
    </citation>
    <scope>PHOSPHORYLATION [LARGE SCALE ANALYSIS] AT THR-91 AND THR-92</scope>
    <scope>IDENTIFICATION BY MASS SPECTROMETRY [LARGE SCALE ANALYSIS]</scope>
</reference>
<reference key="16">
    <citation type="journal article" date="2012" name="Proc. Natl. Acad. Sci. U.S.A.">
        <title>N-terminal acetylome analyses and functional insights of the N-terminal acetyltransferase NatB.</title>
        <authorList>
            <person name="Van Damme P."/>
            <person name="Lasa M."/>
            <person name="Polevoda B."/>
            <person name="Gazquez C."/>
            <person name="Elosegui-Artola A."/>
            <person name="Kim D.S."/>
            <person name="De Juan-Pardo E."/>
            <person name="Demeyer K."/>
            <person name="Hole K."/>
            <person name="Larrea E."/>
            <person name="Timmerman E."/>
            <person name="Prieto J."/>
            <person name="Arnesen T."/>
            <person name="Sherman F."/>
            <person name="Gevaert K."/>
            <person name="Aldabe R."/>
        </authorList>
    </citation>
    <scope>ACETYLATION [LARGE SCALE ANALYSIS] AT MET-1</scope>
    <scope>IDENTIFICATION BY MASS SPECTROMETRY [LARGE SCALE ANALYSIS]</scope>
</reference>
<reference key="17">
    <citation type="journal article" date="2003" name="Mol. Cell">
        <title>RNA polymerase II/TFIIF structure and conserved organization of the initiation complex.</title>
        <authorList>
            <person name="Chung W.H."/>
            <person name="Craighead J.L."/>
            <person name="Chang W.H."/>
            <person name="Ezeokonkwo C."/>
            <person name="Bareket-Samish A."/>
            <person name="Kornberg R.D."/>
            <person name="Asturias F.J."/>
        </authorList>
    </citation>
    <scope>ELECTRON MICROSCOPY OF THE RNA POL II/TFIIF COMPLEX</scope>
    <scope>INTERACTION WITH TFG1</scope>
</reference>
<reference key="18">
    <citation type="journal article" date="2003" name="Cell">
        <title>Architecture of the RNA polymerase II-TFIIS complex and implications for mRNA cleavage.</title>
        <authorList>
            <person name="Kettenberger H."/>
            <person name="Armache K.J."/>
            <person name="Cramer P."/>
        </authorList>
    </citation>
    <scope>X-RAY CRYSTALLOGRAPHY (3.8 ANGSTROMS) OF THE RNA POL II COMPLEX IN COMPLEX WITH DST1</scope>
</reference>
<reference key="19">
    <citation type="journal article" date="2003" name="Proc. Natl. Acad. Sci. U.S.A.">
        <title>Architecture of initiation-competent 12-subunit RNA polymerase II.</title>
        <authorList>
            <person name="Armache K.J."/>
            <person name="Kettenberger H."/>
            <person name="Cramer P."/>
        </authorList>
    </citation>
    <scope>X-RAY CRYSTALLOGRAPHY (4.2 ANGSTROMS) OF THE RNA POL II COMPLEX</scope>
</reference>
<reference key="20">
    <citation type="journal article" date="2004" name="Mol. Cell">
        <title>Complete RNA polymerase II elongation complex structure and its interactions with NTP and TFIIS.</title>
        <authorList>
            <person name="Kettenberger H."/>
            <person name="Armache K.J."/>
            <person name="Cramer P."/>
        </authorList>
    </citation>
    <scope>X-RAY CRYSTALLOGRAPHY (4.5 ANGSTROMS) OF THE RNA POL II COMPLEX</scope>
</reference>
<reference key="21">
    <citation type="journal article" date="2005" name="J. Biol. Chem.">
        <title>Structures of complete RNA polymerase II and its subcomplex, Rpb4/7.</title>
        <authorList>
            <person name="Armache K.J."/>
            <person name="Mitterweger S."/>
            <person name="Meinhart A."/>
            <person name="Cramer P."/>
        </authorList>
    </citation>
    <scope>X-RAY CRYSTALLOGRAPHY (3.8 ANGSTROMS) OF THE RNA POL II COMPLEX</scope>
</reference>
<reference key="22">
    <citation type="journal article" date="2006" name="Nat. Struct. Mol. Biol.">
        <title>Structure of an RNA polymerase II-RNA inhibitor complex elucidates transcription regulation by noncoding RNAs.</title>
        <authorList>
            <person name="Kettenberger H."/>
            <person name="Eisenfuhr A."/>
            <person name="Brueckner F."/>
            <person name="Theis M."/>
            <person name="Famulok M."/>
            <person name="Cramer P."/>
        </authorList>
    </citation>
    <scope>X-RAY CRYSTALLOGRAPHY (3.8 ANGSTROMS) OF THE RNA POL II COMPLEX IN COMPLEX WITH INHIBITING NON-CODING RNA</scope>
</reference>
<reference key="23">
    <citation type="journal article" date="2006" name="Structure">
        <title>Phasing RNA polymerase II using intrinsically bound Zn atoms: an updated structural model.</title>
        <authorList>
            <person name="Meyer P.A."/>
            <person name="Ye P."/>
            <person name="Zhang M."/>
            <person name="Suh M.H."/>
            <person name="Fu J."/>
        </authorList>
    </citation>
    <scope>X-RAY CRYSTALLOGRAPHY (4.15 ANGSTROMS) OF THE RNA POL II COMPLEX</scope>
</reference>
<accession>P20433</accession>
<accession>D6VW44</accession>
<keyword id="KW-0002">3D-structure</keyword>
<keyword id="KW-0007">Acetylation</keyword>
<keyword id="KW-0963">Cytoplasm</keyword>
<keyword id="KW-0240">DNA-directed RNA polymerase</keyword>
<keyword id="KW-0507">mRNA processing</keyword>
<keyword id="KW-0539">Nucleus</keyword>
<keyword id="KW-0597">Phosphoprotein</keyword>
<keyword id="KW-1185">Reference proteome</keyword>
<keyword id="KW-0804">Transcription</keyword>
<name>RPB4_YEAST</name>
<evidence type="ECO:0000256" key="1">
    <source>
        <dbReference type="SAM" id="MobiDB-lite"/>
    </source>
</evidence>
<evidence type="ECO:0000269" key="2">
    <source>
    </source>
</evidence>
<evidence type="ECO:0000269" key="3">
    <source>
    </source>
</evidence>
<evidence type="ECO:0000269" key="4">
    <source>
    </source>
</evidence>
<evidence type="ECO:0000269" key="5">
    <source>
    </source>
</evidence>
<evidence type="ECO:0000269" key="6">
    <source>
    </source>
</evidence>
<evidence type="ECO:0000269" key="7">
    <source>
    </source>
</evidence>
<evidence type="ECO:0000269" key="8">
    <source>
    </source>
</evidence>
<evidence type="ECO:0000269" key="9">
    <source>
    </source>
</evidence>
<evidence type="ECO:0000269" key="10">
    <source>
    </source>
</evidence>
<evidence type="ECO:0000269" key="11">
    <source>
    </source>
</evidence>
<evidence type="ECO:0000305" key="12"/>
<evidence type="ECO:0007744" key="13">
    <source>
    </source>
</evidence>
<evidence type="ECO:0007744" key="14">
    <source>
    </source>
</evidence>
<evidence type="ECO:0007829" key="15">
    <source>
        <dbReference type="PDB" id="1Y14"/>
    </source>
</evidence>
<evidence type="ECO:0007829" key="16">
    <source>
        <dbReference type="PDB" id="3PO2"/>
    </source>
</evidence>
<evidence type="ECO:0007829" key="17">
    <source>
        <dbReference type="PDB" id="4BXX"/>
    </source>
</evidence>
<evidence type="ECO:0007829" key="18">
    <source>
        <dbReference type="PDB" id="7NKX"/>
    </source>
</evidence>
<evidence type="ECO:0007829" key="19">
    <source>
        <dbReference type="PDB" id="8JCH"/>
    </source>
</evidence>
<evidence type="ECO:0007829" key="20">
    <source>
        <dbReference type="PDB" id="8K5P"/>
    </source>
</evidence>
<evidence type="ECO:0007829" key="21">
    <source>
        <dbReference type="PDB" id="8TVY"/>
    </source>
</evidence>
<comment type="function">
    <text evidence="2 3 4 5 8 10 11">DNA-dependent RNA polymerase catalyzes the transcription of DNA into RNA using the four ribonucleoside triphosphates as substrates. Component of RNA polymerase II which synthesizes mRNA precursors and many functional non-coding RNAs. Pol II is the central component of the basal RNA polymerase II transcription machinery. It is composed of mobile elements that move relative to each other. RPB4 is part of a subcomplex with RPB7 that binds to a pocket formed by RPB1, RPB2 and RPB6 at the base of the clamp element. The RPB4-RPB7 subcomplex seems to lock the clamp via RPB7 in the closed conformation thus preventing double-stranded DNA to enter the active site cleft. The RPB4-RPB7 subcomplex binds single-stranded DNA and RNA. The RPB4-RPB7 subcomplex is necessary for promoter-directed transcription initiation but is not required for recruitment of Pol II to active preinitiation complexes and seems to be dispensable for transcription elongation and termination. The RPB4-RPB7 subcomplex recruits FCP1 to Pol II. Involved in DNA repair of damage in the transcribed strand. RPB4 is dispensable under optimal growth conditions, but becomes essential during heat or cold shock and under nutrient depletion. Suppresses the RBP9-mediated transcription-coupled repair (TCR) subpathway of nucleotide excision repair (NER) but facilitates the RAD26-mediated TCR subpathway. Under stress conditions only, involved in mRNA export to the cytoplasm. Involved in mRNA decay. Promotes or enhances the deadenylation process of specific mRNAs and may recruit PAT1 and the LSM1-7 complex to these mRNAs, thus stimulating their decapping and further decay.</text>
</comment>
<comment type="subunit">
    <text evidence="6 7 9 10">Component of the RNA polymerase II (Pol II) complex consisting of 12 subunits. RPB4 and RPB7 form a dissociable subcomplex associated with the 10-subunit Pol II core complex. In exponentially proliferating cells, only approximately 20 % of the Pol II complexes contain the RPB4-RPB7 subcomplex. In starving cells, that enter stationary phase, RPB4-RPB7 is associated with Pol II in a stoechiometric manner. The RPB4-RPB7 subcomplex probably associates with TFG1. Interacts with LSM2 and PAT1.</text>
</comment>
<comment type="interaction">
    <interactant intactId="EBI-15777">
        <id>P20433</id>
    </interactant>
    <interactant intactId="EBI-8965">
        <id>P32497</id>
        <label>NIP1</label>
    </interactant>
    <organismsDiffer>false</organismsDiffer>
    <experiments>5</experiments>
</comment>
<comment type="interaction">
    <interactant intactId="EBI-15777">
        <id>P20433</id>
    </interactant>
    <interactant intactId="EBI-15790">
        <id>P34087</id>
        <label>RPB7</label>
    </interactant>
    <organismsDiffer>false</organismsDiffer>
    <experiments>9</experiments>
</comment>
<comment type="subcellular location">
    <subcellularLocation>
        <location>Nucleus</location>
    </subcellularLocation>
    <subcellularLocation>
        <location>Cytoplasm</location>
    </subcellularLocation>
    <subcellularLocation>
        <location>Cytoplasm</location>
        <location>P-body</location>
    </subcellularLocation>
    <text>Seems to shuttle between nucleus and cytoplasm in a complex with RPB7.</text>
</comment>
<comment type="similarity">
    <text evidence="12">Belongs to the eukaryotic RPB4 RNA polymerase subunit family.</text>
</comment>
<feature type="chain" id="PRO_0000073984" description="DNA-directed RNA polymerase II subunit RPB4">
    <location>
        <begin position="1"/>
        <end position="221"/>
    </location>
</feature>
<feature type="region of interest" description="Disordered" evidence="1">
    <location>
        <begin position="1"/>
        <end position="23"/>
    </location>
</feature>
<feature type="region of interest" description="Disordered" evidence="1">
    <location>
        <begin position="71"/>
        <end position="120"/>
    </location>
</feature>
<feature type="compositionally biased region" description="Basic residues" evidence="1">
    <location>
        <begin position="71"/>
        <end position="83"/>
    </location>
</feature>
<feature type="compositionally biased region" description="Acidic residues" evidence="1">
    <location>
        <begin position="92"/>
        <end position="112"/>
    </location>
</feature>
<feature type="modified residue" description="N-acetylmethionine" evidence="14">
    <location>
        <position position="1"/>
    </location>
</feature>
<feature type="modified residue" description="Phosphothreonine" evidence="13">
    <location>
        <position position="91"/>
    </location>
</feature>
<feature type="modified residue" description="Phosphothreonine" evidence="13">
    <location>
        <position position="92"/>
    </location>
</feature>
<feature type="strand" evidence="16">
    <location>
        <begin position="6"/>
        <end position="8"/>
    </location>
</feature>
<feature type="helix" evidence="21">
    <location>
        <begin position="16"/>
        <end position="18"/>
    </location>
</feature>
<feature type="strand" evidence="19">
    <location>
        <begin position="25"/>
        <end position="27"/>
    </location>
</feature>
<feature type="strand" evidence="19">
    <location>
        <begin position="31"/>
        <end position="33"/>
    </location>
</feature>
<feature type="strand" evidence="19">
    <location>
        <begin position="35"/>
        <end position="37"/>
    </location>
</feature>
<feature type="strand" evidence="20">
    <location>
        <begin position="40"/>
        <end position="43"/>
    </location>
</feature>
<feature type="strand" evidence="18">
    <location>
        <begin position="44"/>
        <end position="46"/>
    </location>
</feature>
<feature type="strand" evidence="15">
    <location>
        <begin position="47"/>
        <end position="50"/>
    </location>
</feature>
<feature type="helix" evidence="15">
    <location>
        <begin position="52"/>
        <end position="71"/>
    </location>
</feature>
<feature type="turn" evidence="17">
    <location>
        <begin position="73"/>
        <end position="75"/>
    </location>
</feature>
<feature type="helix" evidence="15">
    <location>
        <begin position="119"/>
        <end position="133"/>
    </location>
</feature>
<feature type="helix" evidence="15">
    <location>
        <begin position="139"/>
        <end position="151"/>
    </location>
</feature>
<feature type="helix" evidence="15">
    <location>
        <begin position="157"/>
        <end position="168"/>
    </location>
</feature>
<feature type="turn" evidence="15">
    <location>
        <begin position="169"/>
        <end position="171"/>
    </location>
</feature>
<feature type="helix" evidence="15">
    <location>
        <begin position="174"/>
        <end position="182"/>
    </location>
</feature>
<feature type="helix" evidence="15">
    <location>
        <begin position="188"/>
        <end position="194"/>
    </location>
</feature>
<feature type="helix" evidence="15">
    <location>
        <begin position="196"/>
        <end position="198"/>
    </location>
</feature>
<feature type="turn" evidence="15">
    <location>
        <begin position="199"/>
        <end position="201"/>
    </location>
</feature>
<feature type="helix" evidence="15">
    <location>
        <begin position="204"/>
        <end position="217"/>
    </location>
</feature>
<sequence length="221" mass="25414">MNVSTSTFQTRRRRLKKVEEEENAATLQLGQEFQLKQINHQGEEEELIALNLSEARLVIKEALVERRRAFKRSQKKHKKKHLKHENANDETTAVEDEDDDLDEDDVNADDDDFMHSETREKELESIDVLLEQTTGGNNKDLKNTMQYLTNFSRFRDQETVGAVIQLLKSTGLHPFEVAQLGSLACDTADEAKTLIPSLNNKISDDELERILKELSNLETLY</sequence>
<organism>
    <name type="scientific">Saccharomyces cerevisiae (strain ATCC 204508 / S288c)</name>
    <name type="common">Baker's yeast</name>
    <dbReference type="NCBI Taxonomy" id="559292"/>
    <lineage>
        <taxon>Eukaryota</taxon>
        <taxon>Fungi</taxon>
        <taxon>Dikarya</taxon>
        <taxon>Ascomycota</taxon>
        <taxon>Saccharomycotina</taxon>
        <taxon>Saccharomycetes</taxon>
        <taxon>Saccharomycetales</taxon>
        <taxon>Saccharomycetaceae</taxon>
        <taxon>Saccharomyces</taxon>
    </lineage>
</organism>
<dbReference type="EMBL" id="M27253">
    <property type="protein sequence ID" value="AAA34996.1"/>
    <property type="molecule type" value="Genomic_DNA"/>
</dbReference>
<dbReference type="EMBL" id="X58099">
    <property type="protein sequence ID" value="CAA41112.1"/>
    <property type="molecule type" value="Genomic_DNA"/>
</dbReference>
<dbReference type="EMBL" id="X87371">
    <property type="protein sequence ID" value="CAA60815.1"/>
    <property type="molecule type" value="Genomic_DNA"/>
</dbReference>
<dbReference type="EMBL" id="Z49415">
    <property type="protein sequence ID" value="CAA89435.1"/>
    <property type="molecule type" value="Genomic_DNA"/>
</dbReference>
<dbReference type="EMBL" id="AY557856">
    <property type="protein sequence ID" value="AAS56182.1"/>
    <property type="molecule type" value="Genomic_DNA"/>
</dbReference>
<dbReference type="EMBL" id="BK006943">
    <property type="protein sequence ID" value="DAA08660.1"/>
    <property type="molecule type" value="Genomic_DNA"/>
</dbReference>
<dbReference type="PIR" id="A32490">
    <property type="entry name" value="A32490"/>
</dbReference>
<dbReference type="RefSeq" id="NP_012395.1">
    <property type="nucleotide sequence ID" value="NM_001181573.1"/>
</dbReference>
<dbReference type="PDB" id="1NT9">
    <property type="method" value="X-ray"/>
    <property type="resolution" value="4.20 A"/>
    <property type="chains" value="D=1-221"/>
</dbReference>
<dbReference type="PDB" id="1PQV">
    <property type="method" value="X-ray"/>
    <property type="resolution" value="3.80 A"/>
    <property type="chains" value="D=1-85, D=115-221"/>
</dbReference>
<dbReference type="PDB" id="1WCM">
    <property type="method" value="X-ray"/>
    <property type="resolution" value="3.80 A"/>
    <property type="chains" value="D=4-221"/>
</dbReference>
<dbReference type="PDB" id="1Y14">
    <property type="method" value="X-ray"/>
    <property type="resolution" value="2.30 A"/>
    <property type="chains" value="A/C=35-221"/>
</dbReference>
<dbReference type="PDB" id="1Y1V">
    <property type="method" value="X-ray"/>
    <property type="resolution" value="3.80 A"/>
    <property type="chains" value="D=1-221"/>
</dbReference>
<dbReference type="PDB" id="1Y1W">
    <property type="method" value="X-ray"/>
    <property type="resolution" value="4.00 A"/>
    <property type="chains" value="D=1-221"/>
</dbReference>
<dbReference type="PDB" id="1Y1Y">
    <property type="method" value="X-ray"/>
    <property type="resolution" value="4.00 A"/>
    <property type="chains" value="D=1-221"/>
</dbReference>
<dbReference type="PDB" id="1Y77">
    <property type="method" value="X-ray"/>
    <property type="resolution" value="4.50 A"/>
    <property type="chains" value="D=1-221"/>
</dbReference>
<dbReference type="PDB" id="2B63">
    <property type="method" value="X-ray"/>
    <property type="resolution" value="3.80 A"/>
    <property type="chains" value="D=1-221"/>
</dbReference>
<dbReference type="PDB" id="2B8K">
    <property type="method" value="X-ray"/>
    <property type="resolution" value="4.15 A"/>
    <property type="chains" value="D=1-221"/>
</dbReference>
<dbReference type="PDB" id="2JA5">
    <property type="method" value="X-ray"/>
    <property type="resolution" value="3.80 A"/>
    <property type="chains" value="D=1-221"/>
</dbReference>
<dbReference type="PDB" id="2JA6">
    <property type="method" value="X-ray"/>
    <property type="resolution" value="4.00 A"/>
    <property type="chains" value="D=1-221"/>
</dbReference>
<dbReference type="PDB" id="2JA7">
    <property type="method" value="X-ray"/>
    <property type="resolution" value="3.80 A"/>
    <property type="chains" value="D/P=1-221"/>
</dbReference>
<dbReference type="PDB" id="2JA8">
    <property type="method" value="X-ray"/>
    <property type="resolution" value="3.80 A"/>
    <property type="chains" value="D=1-221"/>
</dbReference>
<dbReference type="PDB" id="2R7Z">
    <property type="method" value="X-ray"/>
    <property type="resolution" value="3.80 A"/>
    <property type="chains" value="D=1-221"/>
</dbReference>
<dbReference type="PDB" id="2R92">
    <property type="method" value="X-ray"/>
    <property type="resolution" value="3.80 A"/>
    <property type="chains" value="D=1-221"/>
</dbReference>
<dbReference type="PDB" id="2R93">
    <property type="method" value="X-ray"/>
    <property type="resolution" value="4.00 A"/>
    <property type="chains" value="D=1-221"/>
</dbReference>
<dbReference type="PDB" id="2VUM">
    <property type="method" value="X-ray"/>
    <property type="resolution" value="3.40 A"/>
    <property type="chains" value="D=1-221"/>
</dbReference>
<dbReference type="PDB" id="3FKI">
    <property type="method" value="X-ray"/>
    <property type="resolution" value="3.88 A"/>
    <property type="chains" value="D=1-221"/>
</dbReference>
<dbReference type="PDB" id="3H3V">
    <property type="method" value="X-ray"/>
    <property type="resolution" value="4.00 A"/>
    <property type="chains" value="E=1-221"/>
</dbReference>
<dbReference type="PDB" id="3HOU">
    <property type="method" value="X-ray"/>
    <property type="resolution" value="3.20 A"/>
    <property type="chains" value="D/P=1-221"/>
</dbReference>
<dbReference type="PDB" id="3HOV">
    <property type="method" value="X-ray"/>
    <property type="resolution" value="3.50 A"/>
    <property type="chains" value="D=1-221"/>
</dbReference>
<dbReference type="PDB" id="3HOW">
    <property type="method" value="X-ray"/>
    <property type="resolution" value="3.60 A"/>
    <property type="chains" value="D=1-221"/>
</dbReference>
<dbReference type="PDB" id="3HOX">
    <property type="method" value="X-ray"/>
    <property type="resolution" value="3.65 A"/>
    <property type="chains" value="D=1-221"/>
</dbReference>
<dbReference type="PDB" id="3HOY">
    <property type="method" value="X-ray"/>
    <property type="resolution" value="3.40 A"/>
    <property type="chains" value="D=1-221"/>
</dbReference>
<dbReference type="PDB" id="3HOZ">
    <property type="method" value="X-ray"/>
    <property type="resolution" value="3.65 A"/>
    <property type="chains" value="D=1-221"/>
</dbReference>
<dbReference type="PDB" id="3I4M">
    <property type="method" value="X-ray"/>
    <property type="resolution" value="3.70 A"/>
    <property type="chains" value="D=1-221"/>
</dbReference>
<dbReference type="PDB" id="3I4N">
    <property type="method" value="X-ray"/>
    <property type="resolution" value="3.90 A"/>
    <property type="chains" value="D=1-221"/>
</dbReference>
<dbReference type="PDB" id="3J0K">
    <property type="method" value="EM"/>
    <property type="resolution" value="36.00 A"/>
    <property type="chains" value="D=1-221"/>
</dbReference>
<dbReference type="PDB" id="3J1N">
    <property type="method" value="EM"/>
    <property type="resolution" value="16.00 A"/>
    <property type="chains" value="D=4-221"/>
</dbReference>
<dbReference type="PDB" id="3K1F">
    <property type="method" value="X-ray"/>
    <property type="resolution" value="4.30 A"/>
    <property type="chains" value="D=1-221"/>
</dbReference>
<dbReference type="PDB" id="3PO2">
    <property type="method" value="X-ray"/>
    <property type="resolution" value="3.30 A"/>
    <property type="chains" value="D=1-221"/>
</dbReference>
<dbReference type="PDB" id="3PO3">
    <property type="method" value="X-ray"/>
    <property type="resolution" value="3.30 A"/>
    <property type="chains" value="D=1-221"/>
</dbReference>
<dbReference type="PDB" id="3QT1">
    <property type="method" value="X-ray"/>
    <property type="resolution" value="4.30 A"/>
    <property type="chains" value="D=3-221"/>
</dbReference>
<dbReference type="PDB" id="4A3B">
    <property type="method" value="X-ray"/>
    <property type="resolution" value="3.50 A"/>
    <property type="chains" value="D=1-221"/>
</dbReference>
<dbReference type="PDB" id="4A3C">
    <property type="method" value="X-ray"/>
    <property type="resolution" value="3.50 A"/>
    <property type="chains" value="D=1-221"/>
</dbReference>
<dbReference type="PDB" id="4A3D">
    <property type="method" value="X-ray"/>
    <property type="resolution" value="3.40 A"/>
    <property type="chains" value="D=1-221"/>
</dbReference>
<dbReference type="PDB" id="4A3E">
    <property type="method" value="X-ray"/>
    <property type="resolution" value="3.40 A"/>
    <property type="chains" value="D=1-221"/>
</dbReference>
<dbReference type="PDB" id="4A3F">
    <property type="method" value="X-ray"/>
    <property type="resolution" value="3.50 A"/>
    <property type="chains" value="D=1-221"/>
</dbReference>
<dbReference type="PDB" id="4A3G">
    <property type="method" value="X-ray"/>
    <property type="resolution" value="3.50 A"/>
    <property type="chains" value="D=1-221"/>
</dbReference>
<dbReference type="PDB" id="4A3I">
    <property type="method" value="X-ray"/>
    <property type="resolution" value="3.80 A"/>
    <property type="chains" value="D=1-221"/>
</dbReference>
<dbReference type="PDB" id="4A3J">
    <property type="method" value="X-ray"/>
    <property type="resolution" value="3.70 A"/>
    <property type="chains" value="D=1-221"/>
</dbReference>
<dbReference type="PDB" id="4A3K">
    <property type="method" value="X-ray"/>
    <property type="resolution" value="3.50 A"/>
    <property type="chains" value="D=1-221"/>
</dbReference>
<dbReference type="PDB" id="4A3L">
    <property type="method" value="X-ray"/>
    <property type="resolution" value="3.50 A"/>
    <property type="chains" value="D=1-221"/>
</dbReference>
<dbReference type="PDB" id="4A3M">
    <property type="method" value="X-ray"/>
    <property type="resolution" value="3.90 A"/>
    <property type="chains" value="D=1-221"/>
</dbReference>
<dbReference type="PDB" id="4A93">
    <property type="method" value="X-ray"/>
    <property type="resolution" value="3.40 A"/>
    <property type="chains" value="D=1-221"/>
</dbReference>
<dbReference type="PDB" id="4BBR">
    <property type="method" value="X-ray"/>
    <property type="resolution" value="3.40 A"/>
    <property type="chains" value="D=1-221"/>
</dbReference>
<dbReference type="PDB" id="4BBS">
    <property type="method" value="X-ray"/>
    <property type="resolution" value="3.60 A"/>
    <property type="chains" value="D=1-221"/>
</dbReference>
<dbReference type="PDB" id="4BXX">
    <property type="method" value="X-ray"/>
    <property type="resolution" value="3.28 A"/>
    <property type="chains" value="D=1-221"/>
</dbReference>
<dbReference type="PDB" id="4BXZ">
    <property type="method" value="X-ray"/>
    <property type="resolution" value="4.80 A"/>
    <property type="chains" value="D=1-221"/>
</dbReference>
<dbReference type="PDB" id="4BY1">
    <property type="method" value="X-ray"/>
    <property type="resolution" value="3.60 A"/>
    <property type="chains" value="D=1-221"/>
</dbReference>
<dbReference type="PDB" id="4BY7">
    <property type="method" value="X-ray"/>
    <property type="resolution" value="3.15 A"/>
    <property type="chains" value="D=1-221"/>
</dbReference>
<dbReference type="PDB" id="4V1N">
    <property type="method" value="EM"/>
    <property type="resolution" value="7.80 A"/>
    <property type="chains" value="D=1-221"/>
</dbReference>
<dbReference type="PDB" id="4V1O">
    <property type="method" value="EM"/>
    <property type="resolution" value="9.70 A"/>
    <property type="chains" value="D=1-221"/>
</dbReference>
<dbReference type="PDB" id="5C3E">
    <property type="method" value="X-ray"/>
    <property type="resolution" value="3.70 A"/>
    <property type="chains" value="D=1-221"/>
</dbReference>
<dbReference type="PDB" id="5C44">
    <property type="method" value="X-ray"/>
    <property type="resolution" value="3.95 A"/>
    <property type="chains" value="D=1-221"/>
</dbReference>
<dbReference type="PDB" id="5C4A">
    <property type="method" value="X-ray"/>
    <property type="resolution" value="4.20 A"/>
    <property type="chains" value="D=1-221"/>
</dbReference>
<dbReference type="PDB" id="5C4X">
    <property type="method" value="X-ray"/>
    <property type="resolution" value="4.00 A"/>
    <property type="chains" value="D=1-221"/>
</dbReference>
<dbReference type="PDB" id="5FMF">
    <property type="method" value="EM"/>
    <property type="resolution" value="6.00 A"/>
    <property type="chains" value="D=3-221"/>
</dbReference>
<dbReference type="PDB" id="5FYW">
    <property type="method" value="EM"/>
    <property type="resolution" value="4.35 A"/>
    <property type="chains" value="D=1-221"/>
</dbReference>
<dbReference type="PDB" id="5FZ5">
    <property type="method" value="EM"/>
    <property type="resolution" value="8.80 A"/>
    <property type="chains" value="D=1-221"/>
</dbReference>
<dbReference type="PDB" id="5IP7">
    <property type="method" value="X-ray"/>
    <property type="resolution" value="3.52 A"/>
    <property type="chains" value="D=1-221"/>
</dbReference>
<dbReference type="PDB" id="5IP9">
    <property type="method" value="X-ray"/>
    <property type="resolution" value="3.90 A"/>
    <property type="chains" value="D=1-221"/>
</dbReference>
<dbReference type="PDB" id="5OQJ">
    <property type="method" value="EM"/>
    <property type="resolution" value="4.70 A"/>
    <property type="chains" value="D=1-221"/>
</dbReference>
<dbReference type="PDB" id="5OQM">
    <property type="method" value="EM"/>
    <property type="resolution" value="5.80 A"/>
    <property type="chains" value="D=1-221"/>
</dbReference>
<dbReference type="PDB" id="5OT2">
    <property type="method" value="X-ray"/>
    <property type="resolution" value="3.20 A"/>
    <property type="chains" value="D=1-221"/>
</dbReference>
<dbReference type="PDB" id="5SVA">
    <property type="method" value="EM"/>
    <property type="resolution" value="15.30 A"/>
    <property type="chains" value="D=1-221"/>
</dbReference>
<dbReference type="PDB" id="5U5Q">
    <property type="method" value="X-ray"/>
    <property type="resolution" value="3.80 A"/>
    <property type="chains" value="D=1-221"/>
</dbReference>
<dbReference type="PDB" id="5VVR">
    <property type="method" value="EM"/>
    <property type="resolution" value="5.80 A"/>
    <property type="chains" value="D=1-221"/>
</dbReference>
<dbReference type="PDB" id="5VVS">
    <property type="method" value="EM"/>
    <property type="resolution" value="6.40 A"/>
    <property type="chains" value="D=1-221"/>
</dbReference>
<dbReference type="PDB" id="6GYK">
    <property type="method" value="EM"/>
    <property type="resolution" value="5.10 A"/>
    <property type="chains" value="D=2-221"/>
</dbReference>
<dbReference type="PDB" id="6GYL">
    <property type="method" value="EM"/>
    <property type="resolution" value="4.80 A"/>
    <property type="chains" value="D=1-221"/>
</dbReference>
<dbReference type="PDB" id="6GYM">
    <property type="method" value="EM"/>
    <property type="resolution" value="6.70 A"/>
    <property type="chains" value="D=1-221"/>
</dbReference>
<dbReference type="PDB" id="6I84">
    <property type="method" value="EM"/>
    <property type="resolution" value="4.40 A"/>
    <property type="chains" value="D=1-221"/>
</dbReference>
<dbReference type="PDB" id="7MEI">
    <property type="method" value="EM"/>
    <property type="resolution" value="3.54 A"/>
    <property type="chains" value="D/d=1-221"/>
</dbReference>
<dbReference type="PDB" id="7MK9">
    <property type="method" value="EM"/>
    <property type="resolution" value="3.54 A"/>
    <property type="chains" value="D=1-221"/>
</dbReference>
<dbReference type="PDB" id="7MKA">
    <property type="method" value="EM"/>
    <property type="resolution" value="3.54 A"/>
    <property type="chains" value="d=1-221"/>
</dbReference>
<dbReference type="PDB" id="7ML0">
    <property type="method" value="EM"/>
    <property type="resolution" value="3.00 A"/>
    <property type="chains" value="D=1-221"/>
</dbReference>
<dbReference type="PDB" id="7ML1">
    <property type="method" value="EM"/>
    <property type="resolution" value="4.00 A"/>
    <property type="chains" value="D=1-221"/>
</dbReference>
<dbReference type="PDB" id="7ML2">
    <property type="method" value="EM"/>
    <property type="resolution" value="3.40 A"/>
    <property type="chains" value="D=1-221"/>
</dbReference>
<dbReference type="PDB" id="7ML4">
    <property type="method" value="EM"/>
    <property type="resolution" value="3.10 A"/>
    <property type="chains" value="D=1-221"/>
</dbReference>
<dbReference type="PDB" id="7NKX">
    <property type="method" value="EM"/>
    <property type="resolution" value="2.90 A"/>
    <property type="chains" value="D=1-221"/>
</dbReference>
<dbReference type="PDB" id="7NKY">
    <property type="method" value="EM"/>
    <property type="resolution" value="3.20 A"/>
    <property type="chains" value="D=1-221"/>
</dbReference>
<dbReference type="PDB" id="7O4I">
    <property type="method" value="EM"/>
    <property type="resolution" value="3.20 A"/>
    <property type="chains" value="D=1-221"/>
</dbReference>
<dbReference type="PDB" id="7O4J">
    <property type="method" value="EM"/>
    <property type="resolution" value="2.90 A"/>
    <property type="chains" value="D=1-221"/>
</dbReference>
<dbReference type="PDB" id="7O4K">
    <property type="method" value="EM"/>
    <property type="resolution" value="3.60 A"/>
    <property type="chains" value="D=1-221"/>
</dbReference>
<dbReference type="PDB" id="7O4L">
    <property type="method" value="EM"/>
    <property type="resolution" value="3.40 A"/>
    <property type="chains" value="D=1-221"/>
</dbReference>
<dbReference type="PDB" id="7O72">
    <property type="method" value="EM"/>
    <property type="resolution" value="3.40 A"/>
    <property type="chains" value="D=1-221"/>
</dbReference>
<dbReference type="PDB" id="7O73">
    <property type="method" value="EM"/>
    <property type="resolution" value="3.40 A"/>
    <property type="chains" value="D=1-221"/>
</dbReference>
<dbReference type="PDB" id="7O75">
    <property type="method" value="EM"/>
    <property type="resolution" value="3.20 A"/>
    <property type="chains" value="D=1-221"/>
</dbReference>
<dbReference type="PDB" id="7UI9">
    <property type="method" value="EM"/>
    <property type="resolution" value="3.30 A"/>
    <property type="chains" value="D=1-221"/>
</dbReference>
<dbReference type="PDB" id="7UIF">
    <property type="method" value="EM"/>
    <property type="resolution" value="4.60 A"/>
    <property type="chains" value="D=1-221"/>
</dbReference>
<dbReference type="PDB" id="7UIO">
    <property type="method" value="EM"/>
    <property type="resolution" value="3.30 A"/>
    <property type="chains" value="AD/BD=1-221"/>
</dbReference>
<dbReference type="PDB" id="7ZS9">
    <property type="method" value="EM"/>
    <property type="resolution" value="3.10 A"/>
    <property type="chains" value="D=1-221"/>
</dbReference>
<dbReference type="PDB" id="7ZSA">
    <property type="method" value="EM"/>
    <property type="resolution" value="4.00 A"/>
    <property type="chains" value="D=1-221"/>
</dbReference>
<dbReference type="PDB" id="7ZSB">
    <property type="method" value="EM"/>
    <property type="resolution" value="6.60 A"/>
    <property type="chains" value="D=1-221"/>
</dbReference>
<dbReference type="PDB" id="8CEN">
    <property type="method" value="EM"/>
    <property type="resolution" value="3.00 A"/>
    <property type="chains" value="D=1-221"/>
</dbReference>
<dbReference type="PDB" id="8CEO">
    <property type="method" value="EM"/>
    <property type="resolution" value="3.60 A"/>
    <property type="chains" value="D=1-221"/>
</dbReference>
<dbReference type="PDB" id="8JCH">
    <property type="method" value="EM"/>
    <property type="resolution" value="2.70 A"/>
    <property type="chains" value="D=1-221"/>
</dbReference>
<dbReference type="PDB" id="8K5P">
    <property type="method" value="EM"/>
    <property type="resolution" value="2.80 A"/>
    <property type="chains" value="D=1-221"/>
</dbReference>
<dbReference type="PDB" id="8RAM">
    <property type="method" value="EM"/>
    <property type="resolution" value="2.80 A"/>
    <property type="chains" value="D=1-221"/>
</dbReference>
<dbReference type="PDB" id="8RAP">
    <property type="method" value="EM"/>
    <property type="resolution" value="4.30 A"/>
    <property type="chains" value="D=1-221"/>
</dbReference>
<dbReference type="PDB" id="8TUG">
    <property type="method" value="EM"/>
    <property type="resolution" value="3.50 A"/>
    <property type="chains" value="D=1-221"/>
</dbReference>
<dbReference type="PDB" id="8TVP">
    <property type="method" value="EM"/>
    <property type="resolution" value="3.70 A"/>
    <property type="chains" value="D=1-221"/>
</dbReference>
<dbReference type="PDB" id="8TVS">
    <property type="method" value="EM"/>
    <property type="resolution" value="4.40 A"/>
    <property type="chains" value="D=1-221"/>
</dbReference>
<dbReference type="PDB" id="8TVV">
    <property type="method" value="EM"/>
    <property type="resolution" value="3.70 A"/>
    <property type="chains" value="D=1-221"/>
</dbReference>
<dbReference type="PDB" id="8TVW">
    <property type="method" value="EM"/>
    <property type="resolution" value="3.60 A"/>
    <property type="chains" value="D=1-221"/>
</dbReference>
<dbReference type="PDB" id="8TVX">
    <property type="method" value="EM"/>
    <property type="resolution" value="3.70 A"/>
    <property type="chains" value="D=1-221"/>
</dbReference>
<dbReference type="PDB" id="8TVY">
    <property type="method" value="EM"/>
    <property type="resolution" value="3.10 A"/>
    <property type="chains" value="D=1-221"/>
</dbReference>
<dbReference type="PDB" id="8UMH">
    <property type="method" value="EM"/>
    <property type="resolution" value="4.10 A"/>
    <property type="chains" value="D=1-221"/>
</dbReference>
<dbReference type="PDB" id="8UMI">
    <property type="method" value="EM"/>
    <property type="resolution" value="3.70 A"/>
    <property type="chains" value="D=1-221"/>
</dbReference>
<dbReference type="PDB" id="8UOQ">
    <property type="method" value="EM"/>
    <property type="resolution" value="3.80 A"/>
    <property type="chains" value="D=1-221"/>
</dbReference>
<dbReference type="PDB" id="8UOT">
    <property type="method" value="EM"/>
    <property type="resolution" value="3.70 A"/>
    <property type="chains" value="D=1-221"/>
</dbReference>
<dbReference type="PDB" id="9BVT">
    <property type="method" value="X-ray"/>
    <property type="resolution" value="3.40 A"/>
    <property type="chains" value="D=1-221"/>
</dbReference>
<dbReference type="PDB" id="9BW0">
    <property type="method" value="X-ray"/>
    <property type="resolution" value="3.51 A"/>
    <property type="chains" value="D=1-221"/>
</dbReference>
<dbReference type="PDB" id="9JA1">
    <property type="method" value="EM"/>
    <property type="resolution" value="2.98 A"/>
    <property type="chains" value="D=1-221"/>
</dbReference>
<dbReference type="PDBsum" id="1NT9"/>
<dbReference type="PDBsum" id="1PQV"/>
<dbReference type="PDBsum" id="1WCM"/>
<dbReference type="PDBsum" id="1Y14"/>
<dbReference type="PDBsum" id="1Y1V"/>
<dbReference type="PDBsum" id="1Y1W"/>
<dbReference type="PDBsum" id="1Y1Y"/>
<dbReference type="PDBsum" id="1Y77"/>
<dbReference type="PDBsum" id="2B63"/>
<dbReference type="PDBsum" id="2B8K"/>
<dbReference type="PDBsum" id="2JA5"/>
<dbReference type="PDBsum" id="2JA6"/>
<dbReference type="PDBsum" id="2JA7"/>
<dbReference type="PDBsum" id="2JA8"/>
<dbReference type="PDBsum" id="2R7Z"/>
<dbReference type="PDBsum" id="2R92"/>
<dbReference type="PDBsum" id="2R93"/>
<dbReference type="PDBsum" id="2VUM"/>
<dbReference type="PDBsum" id="3FKI"/>
<dbReference type="PDBsum" id="3H3V"/>
<dbReference type="PDBsum" id="3HOU"/>
<dbReference type="PDBsum" id="3HOV"/>
<dbReference type="PDBsum" id="3HOW"/>
<dbReference type="PDBsum" id="3HOX"/>
<dbReference type="PDBsum" id="3HOY"/>
<dbReference type="PDBsum" id="3HOZ"/>
<dbReference type="PDBsum" id="3I4M"/>
<dbReference type="PDBsum" id="3I4N"/>
<dbReference type="PDBsum" id="3J0K"/>
<dbReference type="PDBsum" id="3J1N"/>
<dbReference type="PDBsum" id="3K1F"/>
<dbReference type="PDBsum" id="3PO2"/>
<dbReference type="PDBsum" id="3PO3"/>
<dbReference type="PDBsum" id="3QT1"/>
<dbReference type="PDBsum" id="4A3B"/>
<dbReference type="PDBsum" id="4A3C"/>
<dbReference type="PDBsum" id="4A3D"/>
<dbReference type="PDBsum" id="4A3E"/>
<dbReference type="PDBsum" id="4A3F"/>
<dbReference type="PDBsum" id="4A3G"/>
<dbReference type="PDBsum" id="4A3I"/>
<dbReference type="PDBsum" id="4A3J"/>
<dbReference type="PDBsum" id="4A3K"/>
<dbReference type="PDBsum" id="4A3L"/>
<dbReference type="PDBsum" id="4A3M"/>
<dbReference type="PDBsum" id="4A93"/>
<dbReference type="PDBsum" id="4BBR"/>
<dbReference type="PDBsum" id="4BBS"/>
<dbReference type="PDBsum" id="4BXX"/>
<dbReference type="PDBsum" id="4BXZ"/>
<dbReference type="PDBsum" id="4BY1"/>
<dbReference type="PDBsum" id="4BY7"/>
<dbReference type="PDBsum" id="4V1N"/>
<dbReference type="PDBsum" id="4V1O"/>
<dbReference type="PDBsum" id="5C3E"/>
<dbReference type="PDBsum" id="5C44"/>
<dbReference type="PDBsum" id="5C4A"/>
<dbReference type="PDBsum" id="5C4X"/>
<dbReference type="PDBsum" id="5FMF"/>
<dbReference type="PDBsum" id="5FYW"/>
<dbReference type="PDBsum" id="5FZ5"/>
<dbReference type="PDBsum" id="5IP7"/>
<dbReference type="PDBsum" id="5IP9"/>
<dbReference type="PDBsum" id="5OQJ"/>
<dbReference type="PDBsum" id="5OQM"/>
<dbReference type="PDBsum" id="5OT2"/>
<dbReference type="PDBsum" id="5SVA"/>
<dbReference type="PDBsum" id="5U5Q"/>
<dbReference type="PDBsum" id="5VVR"/>
<dbReference type="PDBsum" id="5VVS"/>
<dbReference type="PDBsum" id="6GYK"/>
<dbReference type="PDBsum" id="6GYL"/>
<dbReference type="PDBsum" id="6GYM"/>
<dbReference type="PDBsum" id="6I84"/>
<dbReference type="PDBsum" id="7MEI"/>
<dbReference type="PDBsum" id="7MK9"/>
<dbReference type="PDBsum" id="7MKA"/>
<dbReference type="PDBsum" id="7ML0"/>
<dbReference type="PDBsum" id="7ML1"/>
<dbReference type="PDBsum" id="7ML2"/>
<dbReference type="PDBsum" id="7ML4"/>
<dbReference type="PDBsum" id="7NKX"/>
<dbReference type="PDBsum" id="7NKY"/>
<dbReference type="PDBsum" id="7O4I"/>
<dbReference type="PDBsum" id="7O4J"/>
<dbReference type="PDBsum" id="7O4K"/>
<dbReference type="PDBsum" id="7O4L"/>
<dbReference type="PDBsum" id="7O72"/>
<dbReference type="PDBsum" id="7O73"/>
<dbReference type="PDBsum" id="7O75"/>
<dbReference type="PDBsum" id="7UI9"/>
<dbReference type="PDBsum" id="7UIF"/>
<dbReference type="PDBsum" id="7UIO"/>
<dbReference type="PDBsum" id="7ZS9"/>
<dbReference type="PDBsum" id="7ZSA"/>
<dbReference type="PDBsum" id="7ZSB"/>
<dbReference type="PDBsum" id="8CEN"/>
<dbReference type="PDBsum" id="8CEO"/>
<dbReference type="PDBsum" id="8JCH"/>
<dbReference type="PDBsum" id="8K5P"/>
<dbReference type="PDBsum" id="8RAM"/>
<dbReference type="PDBsum" id="8RAP"/>
<dbReference type="PDBsum" id="8TUG"/>
<dbReference type="PDBsum" id="8TVP"/>
<dbReference type="PDBsum" id="8TVS"/>
<dbReference type="PDBsum" id="8TVV"/>
<dbReference type="PDBsum" id="8TVW"/>
<dbReference type="PDBsum" id="8TVX"/>
<dbReference type="PDBsum" id="8TVY"/>
<dbReference type="PDBsum" id="8UMH"/>
<dbReference type="PDBsum" id="8UMI"/>
<dbReference type="PDBsum" id="8UOQ"/>
<dbReference type="PDBsum" id="8UOT"/>
<dbReference type="PDBsum" id="9BVT"/>
<dbReference type="PDBsum" id="9BW0"/>
<dbReference type="PDBsum" id="9JA1"/>
<dbReference type="EMDB" id="EMD-0090"/>
<dbReference type="EMDB" id="EMD-0091"/>
<dbReference type="EMDB" id="EMD-0092"/>
<dbReference type="EMDB" id="EMD-12449"/>
<dbReference type="EMDB" id="EMD-12450"/>
<dbReference type="EMDB" id="EMD-12719"/>
<dbReference type="EMDB" id="EMD-12720"/>
<dbReference type="EMDB" id="EMD-12721"/>
<dbReference type="EMDB" id="EMD-12722"/>
<dbReference type="EMDB" id="EMD-12743"/>
<dbReference type="EMDB" id="EMD-12744"/>
<dbReference type="EMDB" id="EMD-12745"/>
<dbReference type="EMDB" id="EMD-14927"/>
<dbReference type="EMDB" id="EMD-14928"/>
<dbReference type="EMDB" id="EMD-14929"/>
<dbReference type="EMDB" id="EMD-16610"/>
<dbReference type="EMDB" id="EMD-16611"/>
<dbReference type="EMDB" id="EMD-19019"/>
<dbReference type="EMDB" id="EMD-19022"/>
<dbReference type="EMDB" id="EMD-23904"/>
<dbReference type="EMDB" id="EMD-26542"/>
<dbReference type="EMDB" id="EMD-26544"/>
<dbReference type="EMDB" id="EMD-26551"/>
<dbReference type="EMDB" id="EMD-2784"/>
<dbReference type="EMDB" id="EMD-2785"/>
<dbReference type="EMDB" id="EMD-2786"/>
<dbReference type="EMDB" id="EMD-36162"/>
<dbReference type="EMDB" id="EMD-36908"/>
<dbReference type="EMDB" id="EMD-3846"/>
<dbReference type="EMDB" id="EMD-3850"/>
<dbReference type="EMDB" id="EMD-42437"/>
<dbReference type="EMDB" id="EMD-42438"/>
<dbReference type="EMDB" id="EMD-4429"/>
<dbReference type="EMDB" id="EMD-61287"/>
<dbReference type="EMDB" id="EMD-8305"/>
<dbReference type="EMDB" id="EMD-8735"/>
<dbReference type="EMDB" id="EMD-8737"/>
<dbReference type="SMR" id="P20433"/>
<dbReference type="BioGRID" id="33617">
    <property type="interactions" value="178"/>
</dbReference>
<dbReference type="ComplexPortal" id="CPX-1891">
    <property type="entry name" value="RPB4-RPB7 subcomplex"/>
</dbReference>
<dbReference type="ComplexPortal" id="CPX-2662">
    <property type="entry name" value="DNA-directed RNA polymerase II complex"/>
</dbReference>
<dbReference type="DIP" id="DIP-55N"/>
<dbReference type="FunCoup" id="P20433">
    <property type="interactions" value="292"/>
</dbReference>
<dbReference type="IntAct" id="P20433">
    <property type="interactions" value="48"/>
</dbReference>
<dbReference type="MINT" id="P20433"/>
<dbReference type="STRING" id="4932.YJL140W"/>
<dbReference type="iPTMnet" id="P20433"/>
<dbReference type="PaxDb" id="4932-YJL140W"/>
<dbReference type="PeptideAtlas" id="P20433"/>
<dbReference type="EnsemblFungi" id="YJL140W_mRNA">
    <property type="protein sequence ID" value="YJL140W"/>
    <property type="gene ID" value="YJL140W"/>
</dbReference>
<dbReference type="GeneID" id="853301"/>
<dbReference type="KEGG" id="sce:YJL140W"/>
<dbReference type="AGR" id="SGD:S000003676"/>
<dbReference type="SGD" id="S000003676">
    <property type="gene designation" value="RPB4"/>
</dbReference>
<dbReference type="VEuPathDB" id="FungiDB:YJL140W"/>
<dbReference type="eggNOG" id="KOG2351">
    <property type="taxonomic scope" value="Eukaryota"/>
</dbReference>
<dbReference type="GeneTree" id="ENSGT00390000004912"/>
<dbReference type="HOGENOM" id="CLU_110332_0_0_1"/>
<dbReference type="InParanoid" id="P20433"/>
<dbReference type="OMA" id="EPLHPFE"/>
<dbReference type="OrthoDB" id="2186918at2759"/>
<dbReference type="BioCyc" id="YEAST:G3O-31585-MONOMER"/>
<dbReference type="Reactome" id="R-SCE-113418">
    <property type="pathway name" value="Formation of the Early Elongation Complex"/>
</dbReference>
<dbReference type="Reactome" id="R-SCE-674695">
    <property type="pathway name" value="RNA Polymerase II Pre-transcription Events"/>
</dbReference>
<dbReference type="Reactome" id="R-SCE-6781823">
    <property type="pathway name" value="Formation of TC-NER Pre-Incision Complex"/>
</dbReference>
<dbReference type="Reactome" id="R-SCE-6782135">
    <property type="pathway name" value="Dual incision in TC-NER"/>
</dbReference>
<dbReference type="Reactome" id="R-SCE-6782210">
    <property type="pathway name" value="Gap-filling DNA repair synthesis and ligation in TC-NER"/>
</dbReference>
<dbReference type="Reactome" id="R-SCE-6796648">
    <property type="pathway name" value="TP53 Regulates Transcription of DNA Repair Genes"/>
</dbReference>
<dbReference type="Reactome" id="R-SCE-6807505">
    <property type="pathway name" value="RNA polymerase II transcribes snRNA genes"/>
</dbReference>
<dbReference type="Reactome" id="R-SCE-72086">
    <property type="pathway name" value="mRNA Capping"/>
</dbReference>
<dbReference type="Reactome" id="R-SCE-72203">
    <property type="pathway name" value="Processing of Capped Intron-Containing Pre-mRNA"/>
</dbReference>
<dbReference type="Reactome" id="R-SCE-73776">
    <property type="pathway name" value="RNA Polymerase II Promoter Escape"/>
</dbReference>
<dbReference type="Reactome" id="R-SCE-73779">
    <property type="pathway name" value="RNA Polymerase II Transcription Pre-Initiation And Promoter Opening"/>
</dbReference>
<dbReference type="Reactome" id="R-SCE-75953">
    <property type="pathway name" value="RNA Polymerase II Transcription Initiation"/>
</dbReference>
<dbReference type="Reactome" id="R-SCE-76042">
    <property type="pathway name" value="RNA Polymerase II Transcription Initiation And Promoter Clearance"/>
</dbReference>
<dbReference type="Reactome" id="R-SCE-77075">
    <property type="pathway name" value="RNA Pol II CTD phosphorylation and interaction with CE"/>
</dbReference>
<dbReference type="Reactome" id="R-SCE-9018519">
    <property type="pathway name" value="Estrogen-dependent gene expression"/>
</dbReference>
<dbReference type="BioGRID-ORCS" id="853301">
    <property type="hits" value="0 hits in 10 CRISPR screens"/>
</dbReference>
<dbReference type="CD-CODE" id="A777E0F8">
    <property type="entry name" value="P-body"/>
</dbReference>
<dbReference type="EvolutionaryTrace" id="P20433"/>
<dbReference type="PRO" id="PR:P20433"/>
<dbReference type="Proteomes" id="UP000002311">
    <property type="component" value="Chromosome X"/>
</dbReference>
<dbReference type="RNAct" id="P20433">
    <property type="molecule type" value="protein"/>
</dbReference>
<dbReference type="GO" id="GO:0005737">
    <property type="term" value="C:cytoplasm"/>
    <property type="evidence" value="ECO:0000314"/>
    <property type="project" value="SGD"/>
</dbReference>
<dbReference type="GO" id="GO:0005634">
    <property type="term" value="C:nucleus"/>
    <property type="evidence" value="ECO:0000314"/>
    <property type="project" value="SGD"/>
</dbReference>
<dbReference type="GO" id="GO:0000932">
    <property type="term" value="C:P-body"/>
    <property type="evidence" value="ECO:0000314"/>
    <property type="project" value="SGD"/>
</dbReference>
<dbReference type="GO" id="GO:0005665">
    <property type="term" value="C:RNA polymerase II, core complex"/>
    <property type="evidence" value="ECO:0000314"/>
    <property type="project" value="SGD"/>
</dbReference>
<dbReference type="GO" id="GO:1990328">
    <property type="term" value="C:RPB4-RPB7 complex"/>
    <property type="evidence" value="ECO:0000353"/>
    <property type="project" value="ComplexPortal"/>
</dbReference>
<dbReference type="GO" id="GO:0000166">
    <property type="term" value="F:nucleotide binding"/>
    <property type="evidence" value="ECO:0007669"/>
    <property type="project" value="InterPro"/>
</dbReference>
<dbReference type="GO" id="GO:0031369">
    <property type="term" value="F:translation initiation factor binding"/>
    <property type="evidence" value="ECO:0000353"/>
    <property type="project" value="SGD"/>
</dbReference>
<dbReference type="GO" id="GO:0006352">
    <property type="term" value="P:DNA-templated transcription initiation"/>
    <property type="evidence" value="ECO:0000303"/>
    <property type="project" value="ComplexPortal"/>
</dbReference>
<dbReference type="GO" id="GO:0006397">
    <property type="term" value="P:mRNA processing"/>
    <property type="evidence" value="ECO:0007669"/>
    <property type="project" value="UniProtKB-KW"/>
</dbReference>
<dbReference type="GO" id="GO:0000288">
    <property type="term" value="P:nuclear-transcribed mRNA catabolic process, deadenylation-dependent decay"/>
    <property type="evidence" value="ECO:0000315"/>
    <property type="project" value="SGD"/>
</dbReference>
<dbReference type="GO" id="GO:0045948">
    <property type="term" value="P:positive regulation of translational initiation"/>
    <property type="evidence" value="ECO:0000315"/>
    <property type="project" value="SGD"/>
</dbReference>
<dbReference type="GO" id="GO:0001172">
    <property type="term" value="P:RNA-templated transcription"/>
    <property type="evidence" value="ECO:0007669"/>
    <property type="project" value="GOC"/>
</dbReference>
<dbReference type="GO" id="GO:0006366">
    <property type="term" value="P:transcription by RNA polymerase II"/>
    <property type="evidence" value="ECO:0000315"/>
    <property type="project" value="SGD"/>
</dbReference>
<dbReference type="GO" id="GO:0006368">
    <property type="term" value="P:transcription elongation by RNA polymerase II"/>
    <property type="evidence" value="ECO:0000314"/>
    <property type="project" value="ComplexPortal"/>
</dbReference>
<dbReference type="GO" id="GO:0006367">
    <property type="term" value="P:transcription initiation at RNA polymerase II promoter"/>
    <property type="evidence" value="ECO:0000314"/>
    <property type="project" value="SGD"/>
</dbReference>
<dbReference type="Gene3D" id="1.20.1250.40">
    <property type="match status" value="1"/>
</dbReference>
<dbReference type="InterPro" id="IPR010997">
    <property type="entry name" value="HRDC-like_sf"/>
</dbReference>
<dbReference type="InterPro" id="IPR006590">
    <property type="entry name" value="RNA_pol_Rpb4/RPC9_core"/>
</dbReference>
<dbReference type="InterPro" id="IPR045222">
    <property type="entry name" value="Rpb4-like"/>
</dbReference>
<dbReference type="InterPro" id="IPR005574">
    <property type="entry name" value="Rpb4/RPC9"/>
</dbReference>
<dbReference type="InterPro" id="IPR038324">
    <property type="entry name" value="Rpb4/RPC9_sf"/>
</dbReference>
<dbReference type="PANTHER" id="PTHR21297">
    <property type="entry name" value="DNA-DIRECTED RNA POLYMERASE II"/>
    <property type="match status" value="1"/>
</dbReference>
<dbReference type="Pfam" id="PF03874">
    <property type="entry name" value="RNA_pol_Rpb4"/>
    <property type="match status" value="1"/>
</dbReference>
<dbReference type="SMART" id="SM00657">
    <property type="entry name" value="RPOL4c"/>
    <property type="match status" value="1"/>
</dbReference>
<dbReference type="SUPFAM" id="SSF47819">
    <property type="entry name" value="HRDC-like"/>
    <property type="match status" value="1"/>
</dbReference>